<evidence type="ECO:0000250" key="1">
    <source>
        <dbReference type="UniProtKB" id="P37329"/>
    </source>
</evidence>
<evidence type="ECO:0000305" key="2"/>
<sequence>MRWIGLSTGLVSAMLVAGLVACGSNSPASSPAGPTQGARSIVVFAAASLQSAFTQIGEQFKAGNPGVNVNFAFAGSSELATQLTQGATADVFASADTAQMDSVAKAGLLAGHPTNFATNTMVIVAAAGNPKKIRSFADLTRPGLNVVVCQPSVPCGSATRRIEDATGIHLNPVSEELSVTDVLNKVITGQADAGLVYVSDALSVATKVTCVRFPEAAGVVNVYAIAVLKRTSQPALARQFVAMVTAAAGRRILDQSGFAKP</sequence>
<feature type="signal peptide" evidence="2">
    <location>
        <begin position="1"/>
        <end position="21"/>
    </location>
</feature>
<feature type="chain" id="PRO_0000031830" description="Molybdate-binding protein ModA">
    <location>
        <begin position="22"/>
        <end position="261"/>
    </location>
</feature>
<feature type="binding site" evidence="1">
    <location>
        <position position="48"/>
    </location>
    <ligand>
        <name>molybdate</name>
        <dbReference type="ChEBI" id="CHEBI:36264"/>
    </ligand>
</feature>
<feature type="binding site" evidence="1">
    <location>
        <position position="76"/>
    </location>
    <ligand>
        <name>molybdate</name>
        <dbReference type="ChEBI" id="CHEBI:36264"/>
    </ligand>
</feature>
<feature type="binding site" evidence="1">
    <location>
        <position position="179"/>
    </location>
    <ligand>
        <name>molybdate</name>
        <dbReference type="ChEBI" id="CHEBI:36264"/>
    </ligand>
</feature>
<feature type="binding site" evidence="1">
    <location>
        <position position="197"/>
    </location>
    <ligand>
        <name>molybdate</name>
        <dbReference type="ChEBI" id="CHEBI:36264"/>
    </ligand>
</feature>
<feature type="lipid moiety-binding region" description="N-palmitoyl cysteine" evidence="2">
    <location>
        <position position="22"/>
    </location>
</feature>
<feature type="lipid moiety-binding region" description="S-diacylglycerol cysteine" evidence="2">
    <location>
        <position position="22"/>
    </location>
</feature>
<reference key="1">
    <citation type="journal article" date="2003" name="Proc. Natl. Acad. Sci. U.S.A.">
        <title>The complete genome sequence of Mycobacterium bovis.</title>
        <authorList>
            <person name="Garnier T."/>
            <person name="Eiglmeier K."/>
            <person name="Camus J.-C."/>
            <person name="Medina N."/>
            <person name="Mansoor H."/>
            <person name="Pryor M."/>
            <person name="Duthoy S."/>
            <person name="Grondin S."/>
            <person name="Lacroix C."/>
            <person name="Monsempe C."/>
            <person name="Simon S."/>
            <person name="Harris B."/>
            <person name="Atkin R."/>
            <person name="Doggett J."/>
            <person name="Mayes R."/>
            <person name="Keating L."/>
            <person name="Wheeler P.R."/>
            <person name="Parkhill J."/>
            <person name="Barrell B.G."/>
            <person name="Cole S.T."/>
            <person name="Gordon S.V."/>
            <person name="Hewinson R.G."/>
        </authorList>
    </citation>
    <scope>NUCLEOTIDE SEQUENCE [LARGE SCALE GENOMIC DNA]</scope>
    <source>
        <strain>ATCC BAA-935 / AF2122/97</strain>
    </source>
</reference>
<reference key="2">
    <citation type="journal article" date="2017" name="Genome Announc.">
        <title>Updated reference genome sequence and annotation of Mycobacterium bovis AF2122/97.</title>
        <authorList>
            <person name="Malone K.M."/>
            <person name="Farrell D."/>
            <person name="Stuber T.P."/>
            <person name="Schubert O.T."/>
            <person name="Aebersold R."/>
            <person name="Robbe-Austerman S."/>
            <person name="Gordon S.V."/>
        </authorList>
    </citation>
    <scope>NUCLEOTIDE SEQUENCE [LARGE SCALE GENOMIC DNA]</scope>
    <scope>GENOME REANNOTATION</scope>
    <source>
        <strain>ATCC BAA-935 / AF2122/97</strain>
    </source>
</reference>
<proteinExistence type="inferred from homology"/>
<protein>
    <recommendedName>
        <fullName evidence="2">Molybdate-binding protein ModA</fullName>
    </recommendedName>
    <alternativeName>
        <fullName evidence="2">Molybdate/tungstate-binding protein ModA</fullName>
    </alternativeName>
</protein>
<gene>
    <name type="primary">modA</name>
    <name type="ordered locus">BQ2027_MB1888</name>
</gene>
<dbReference type="EMBL" id="LT708304">
    <property type="protein sequence ID" value="SIU00492.1"/>
    <property type="molecule type" value="Genomic_DNA"/>
</dbReference>
<dbReference type="RefSeq" id="NP_855540.1">
    <property type="nucleotide sequence ID" value="NC_002945.3"/>
</dbReference>
<dbReference type="RefSeq" id="WP_003409326.1">
    <property type="nucleotide sequence ID" value="NC_002945.4"/>
</dbReference>
<dbReference type="SMR" id="P0A5Y1"/>
<dbReference type="KEGG" id="mbo:BQ2027_MB1888"/>
<dbReference type="PATRIC" id="fig|233413.5.peg.2069"/>
<dbReference type="Proteomes" id="UP000001419">
    <property type="component" value="Chromosome"/>
</dbReference>
<dbReference type="GO" id="GO:0005886">
    <property type="term" value="C:plasma membrane"/>
    <property type="evidence" value="ECO:0007669"/>
    <property type="project" value="UniProtKB-SubCell"/>
</dbReference>
<dbReference type="GO" id="GO:0046872">
    <property type="term" value="F:metal ion binding"/>
    <property type="evidence" value="ECO:0007669"/>
    <property type="project" value="UniProtKB-KW"/>
</dbReference>
<dbReference type="GO" id="GO:0030973">
    <property type="term" value="F:molybdate ion binding"/>
    <property type="evidence" value="ECO:0000250"/>
    <property type="project" value="UniProtKB"/>
</dbReference>
<dbReference type="GO" id="GO:0015689">
    <property type="term" value="P:molybdate ion transport"/>
    <property type="evidence" value="ECO:0007669"/>
    <property type="project" value="InterPro"/>
</dbReference>
<dbReference type="CDD" id="cd13538">
    <property type="entry name" value="PBP2_ModA_like_1"/>
    <property type="match status" value="1"/>
</dbReference>
<dbReference type="FunFam" id="3.40.190.10:FF:000030">
    <property type="entry name" value="Molybdate ABC transporter substrate-binding protein"/>
    <property type="match status" value="1"/>
</dbReference>
<dbReference type="Gene3D" id="3.40.190.10">
    <property type="entry name" value="Periplasmic binding protein-like II"/>
    <property type="match status" value="2"/>
</dbReference>
<dbReference type="InterPro" id="IPR005950">
    <property type="entry name" value="ModA"/>
</dbReference>
<dbReference type="InterPro" id="IPR050682">
    <property type="entry name" value="ModA/WtpA"/>
</dbReference>
<dbReference type="NCBIfam" id="TIGR01256">
    <property type="entry name" value="modA"/>
    <property type="match status" value="1"/>
</dbReference>
<dbReference type="PANTHER" id="PTHR30632">
    <property type="entry name" value="MOLYBDATE-BINDING PERIPLASMIC PROTEIN"/>
    <property type="match status" value="1"/>
</dbReference>
<dbReference type="PANTHER" id="PTHR30632:SF0">
    <property type="entry name" value="SULFATE-BINDING PROTEIN"/>
    <property type="match status" value="1"/>
</dbReference>
<dbReference type="Pfam" id="PF13531">
    <property type="entry name" value="SBP_bac_11"/>
    <property type="match status" value="1"/>
</dbReference>
<dbReference type="PIRSF" id="PIRSF004846">
    <property type="entry name" value="ModA"/>
    <property type="match status" value="1"/>
</dbReference>
<dbReference type="SUPFAM" id="SSF53850">
    <property type="entry name" value="Periplasmic binding protein-like II"/>
    <property type="match status" value="1"/>
</dbReference>
<dbReference type="PROSITE" id="PS51257">
    <property type="entry name" value="PROKAR_LIPOPROTEIN"/>
    <property type="match status" value="1"/>
</dbReference>
<organism>
    <name type="scientific">Mycobacterium bovis (strain ATCC BAA-935 / AF2122/97)</name>
    <dbReference type="NCBI Taxonomy" id="233413"/>
    <lineage>
        <taxon>Bacteria</taxon>
        <taxon>Bacillati</taxon>
        <taxon>Actinomycetota</taxon>
        <taxon>Actinomycetes</taxon>
        <taxon>Mycobacteriales</taxon>
        <taxon>Mycobacteriaceae</taxon>
        <taxon>Mycobacterium</taxon>
        <taxon>Mycobacterium tuberculosis complex</taxon>
    </lineage>
</organism>
<comment type="function">
    <text>Involved in the transport of molybdenum into the cell. Part of the binding-protein-dependent transport system ModABCD.</text>
</comment>
<comment type="subunit">
    <text evidence="2">The complex is composed of two ATP-binding proteins (ModC), two transmembrane proteins (ModB) and a solute-binding protein (ModA).</text>
</comment>
<comment type="subcellular location">
    <subcellularLocation>
        <location evidence="2">Cell membrane</location>
        <topology evidence="2">Lipid-anchor</topology>
    </subcellularLocation>
</comment>
<comment type="similarity">
    <text evidence="2">Belongs to the bacterial solute-binding protein ModA family.</text>
</comment>
<name>MODA_MYCBO</name>
<keyword id="KW-1003">Cell membrane</keyword>
<keyword id="KW-0449">Lipoprotein</keyword>
<keyword id="KW-0472">Membrane</keyword>
<keyword id="KW-0479">Metal-binding</keyword>
<keyword id="KW-0500">Molybdenum</keyword>
<keyword id="KW-0564">Palmitate</keyword>
<keyword id="KW-1185">Reference proteome</keyword>
<keyword id="KW-0732">Signal</keyword>
<keyword id="KW-0813">Transport</keyword>
<keyword id="KW-0826">Tungsten</keyword>
<accession>P0A5Y1</accession>
<accession>A0A1R3XZI8</accession>
<accession>O05125</accession>
<accession>P95157</accession>
<accession>X2BIP4</accession>